<dbReference type="EMBL" id="AY004316">
    <property type="protein sequence ID" value="AAF88135.1"/>
    <property type="molecule type" value="mRNA"/>
</dbReference>
<dbReference type="EMBL" id="CH466524">
    <property type="protein sequence ID" value="EDL37502.1"/>
    <property type="molecule type" value="Genomic_DNA"/>
</dbReference>
<dbReference type="EMBL" id="BC138873">
    <property type="protein sequence ID" value="AAI38874.1"/>
    <property type="molecule type" value="mRNA"/>
</dbReference>
<dbReference type="EMBL" id="BC138875">
    <property type="protein sequence ID" value="AAI38876.1"/>
    <property type="molecule type" value="mRNA"/>
</dbReference>
<dbReference type="CCDS" id="CCDS19237.1"/>
<dbReference type="RefSeq" id="NP_112151.2">
    <property type="nucleotide sequence ID" value="NM_030889.2"/>
</dbReference>
<dbReference type="PDB" id="6FFY">
    <property type="method" value="X-ray"/>
    <property type="resolution" value="3.90 A"/>
    <property type="chains" value="A=116-1077"/>
</dbReference>
<dbReference type="PDB" id="6FG9">
    <property type="method" value="X-ray"/>
    <property type="resolution" value="4.20 A"/>
    <property type="chains" value="A/B=116-1077"/>
</dbReference>
<dbReference type="PDBsum" id="6FFY"/>
<dbReference type="PDBsum" id="6FG9"/>
<dbReference type="SMR" id="Q9EPR5"/>
<dbReference type="BioGRID" id="219891">
    <property type="interactions" value="6"/>
</dbReference>
<dbReference type="FunCoup" id="Q9EPR5">
    <property type="interactions" value="179"/>
</dbReference>
<dbReference type="IntAct" id="Q9EPR5">
    <property type="interactions" value="3"/>
</dbReference>
<dbReference type="STRING" id="10090.ENSMUSP00000041828"/>
<dbReference type="GlyConnect" id="2824">
    <property type="glycosylation" value="1 N-Linked glycan (1 site)"/>
</dbReference>
<dbReference type="GlyCosmos" id="Q9EPR5">
    <property type="glycosylation" value="7 sites, 1 glycan"/>
</dbReference>
<dbReference type="GlyGen" id="Q9EPR5">
    <property type="glycosylation" value="11 sites, 5 N-linked glycans (4 sites), 1 O-linked glycan (2 sites)"/>
</dbReference>
<dbReference type="iPTMnet" id="Q9EPR5"/>
<dbReference type="PhosphoSitePlus" id="Q9EPR5"/>
<dbReference type="SwissPalm" id="Q9EPR5"/>
<dbReference type="PaxDb" id="10090-ENSMUSP00000041828"/>
<dbReference type="ProteomicsDB" id="261112"/>
<dbReference type="Antibodypedia" id="22709">
    <property type="antibodies" value="83 antibodies from 17 providers"/>
</dbReference>
<dbReference type="DNASU" id="81840"/>
<dbReference type="Ensembl" id="ENSMUST00000037370.14">
    <property type="protein sequence ID" value="ENSMUSP00000041828.8"/>
    <property type="gene ID" value="ENSMUSG00000029093.15"/>
</dbReference>
<dbReference type="GeneID" id="81840"/>
<dbReference type="KEGG" id="mmu:81840"/>
<dbReference type="UCSC" id="uc008xek.1">
    <property type="organism name" value="mouse"/>
</dbReference>
<dbReference type="AGR" id="MGI:1932289"/>
<dbReference type="CTD" id="57537"/>
<dbReference type="MGI" id="MGI:1932289">
    <property type="gene designation" value="Sorcs2"/>
</dbReference>
<dbReference type="VEuPathDB" id="HostDB:ENSMUSG00000029093"/>
<dbReference type="eggNOG" id="KOG3511">
    <property type="taxonomic scope" value="Eukaryota"/>
</dbReference>
<dbReference type="GeneTree" id="ENSGT01030000234563"/>
<dbReference type="HOGENOM" id="CLU_010702_0_0_1"/>
<dbReference type="InParanoid" id="Q9EPR5"/>
<dbReference type="OMA" id="SWCVQGR"/>
<dbReference type="OrthoDB" id="443634at2759"/>
<dbReference type="PhylomeDB" id="Q9EPR5"/>
<dbReference type="TreeFam" id="TF324918"/>
<dbReference type="BioGRID-ORCS" id="81840">
    <property type="hits" value="3 hits in 77 CRISPR screens"/>
</dbReference>
<dbReference type="CD-CODE" id="CE726F99">
    <property type="entry name" value="Postsynaptic density"/>
</dbReference>
<dbReference type="ChiTaRS" id="Sorcs2">
    <property type="organism name" value="mouse"/>
</dbReference>
<dbReference type="PRO" id="PR:Q9EPR5"/>
<dbReference type="Proteomes" id="UP000000589">
    <property type="component" value="Chromosome 5"/>
</dbReference>
<dbReference type="RNAct" id="Q9EPR5">
    <property type="molecule type" value="protein"/>
</dbReference>
<dbReference type="Bgee" id="ENSMUSG00000029093">
    <property type="expression patterns" value="Expressed in CA2 field of hippocampus and 239 other cell types or tissues"/>
</dbReference>
<dbReference type="ExpressionAtlas" id="Q9EPR5">
    <property type="expression patterns" value="baseline and differential"/>
</dbReference>
<dbReference type="GO" id="GO:0005829">
    <property type="term" value="C:cytosol"/>
    <property type="evidence" value="ECO:0007669"/>
    <property type="project" value="Ensembl"/>
</dbReference>
<dbReference type="GO" id="GO:0043197">
    <property type="term" value="C:dendritic spine"/>
    <property type="evidence" value="ECO:0007669"/>
    <property type="project" value="UniProtKB-SubCell"/>
</dbReference>
<dbReference type="GO" id="GO:0031901">
    <property type="term" value="C:early endosome membrane"/>
    <property type="evidence" value="ECO:0000314"/>
    <property type="project" value="UniProtKB"/>
</dbReference>
<dbReference type="GO" id="GO:0043204">
    <property type="term" value="C:perikaryon"/>
    <property type="evidence" value="ECO:0007669"/>
    <property type="project" value="UniProtKB-SubCell"/>
</dbReference>
<dbReference type="GO" id="GO:0005886">
    <property type="term" value="C:plasma membrane"/>
    <property type="evidence" value="ECO:0000314"/>
    <property type="project" value="UniProtKB"/>
</dbReference>
<dbReference type="GO" id="GO:0014069">
    <property type="term" value="C:postsynaptic density"/>
    <property type="evidence" value="ECO:0000314"/>
    <property type="project" value="UniProtKB"/>
</dbReference>
<dbReference type="GO" id="GO:0098839">
    <property type="term" value="C:postsynaptic density membrane"/>
    <property type="evidence" value="ECO:0007669"/>
    <property type="project" value="UniProtKB-SubCell"/>
</dbReference>
<dbReference type="GO" id="GO:0055038">
    <property type="term" value="C:recycling endosome membrane"/>
    <property type="evidence" value="ECO:0000314"/>
    <property type="project" value="UniProtKB"/>
</dbReference>
<dbReference type="GO" id="GO:0006886">
    <property type="term" value="P:intracellular protein transport"/>
    <property type="evidence" value="ECO:0000315"/>
    <property type="project" value="UniProtKB"/>
</dbReference>
<dbReference type="GO" id="GO:0060292">
    <property type="term" value="P:long-term synaptic depression"/>
    <property type="evidence" value="ECO:0000315"/>
    <property type="project" value="UniProtKB"/>
</dbReference>
<dbReference type="FunFam" id="2.60.40.10:FF:000083">
    <property type="entry name" value="Sortilin-related VPS10 domain containing receptor 2"/>
    <property type="match status" value="1"/>
</dbReference>
<dbReference type="FunFam" id="3.30.60.270:FF:000003">
    <property type="entry name" value="Sortilin-related VPS10 domain containing receptor 2"/>
    <property type="match status" value="1"/>
</dbReference>
<dbReference type="FunFam" id="2.10.70.80:FF:000001">
    <property type="entry name" value="Sortilin-related VPS10 domain-containing receptor 1"/>
    <property type="match status" value="1"/>
</dbReference>
<dbReference type="FunFam" id="2.130.10.10:FF:000572">
    <property type="entry name" value="VPS10 domain-containing receptor SorCS2 isoform X2"/>
    <property type="match status" value="1"/>
</dbReference>
<dbReference type="Gene3D" id="2.10.70.80">
    <property type="match status" value="1"/>
</dbReference>
<dbReference type="Gene3D" id="3.30.60.270">
    <property type="match status" value="1"/>
</dbReference>
<dbReference type="Gene3D" id="2.60.40.10">
    <property type="entry name" value="Immunoglobulins"/>
    <property type="match status" value="1"/>
</dbReference>
<dbReference type="Gene3D" id="2.130.10.10">
    <property type="entry name" value="YVTN repeat-like/Quinoprotein amine dehydrogenase"/>
    <property type="match status" value="1"/>
</dbReference>
<dbReference type="InterPro" id="IPR013783">
    <property type="entry name" value="Ig-like_fold"/>
</dbReference>
<dbReference type="InterPro" id="IPR000601">
    <property type="entry name" value="PKD_dom"/>
</dbReference>
<dbReference type="InterPro" id="IPR035986">
    <property type="entry name" value="PKD_dom_sf"/>
</dbReference>
<dbReference type="InterPro" id="IPR031777">
    <property type="entry name" value="Sortilin_C"/>
</dbReference>
<dbReference type="InterPro" id="IPR031778">
    <property type="entry name" value="Sortilin_N"/>
</dbReference>
<dbReference type="InterPro" id="IPR006581">
    <property type="entry name" value="VPS10"/>
</dbReference>
<dbReference type="InterPro" id="IPR050310">
    <property type="entry name" value="VPS10-sortilin"/>
</dbReference>
<dbReference type="InterPro" id="IPR015943">
    <property type="entry name" value="WD40/YVTN_repeat-like_dom_sf"/>
</dbReference>
<dbReference type="PANTHER" id="PTHR12106">
    <property type="entry name" value="SORTILIN RELATED"/>
    <property type="match status" value="1"/>
</dbReference>
<dbReference type="PANTHER" id="PTHR12106:SF9">
    <property type="entry name" value="VPS10 DOMAIN-CONTAINING RECEPTOR SORCS2"/>
    <property type="match status" value="1"/>
</dbReference>
<dbReference type="Pfam" id="PF00801">
    <property type="entry name" value="PKD"/>
    <property type="match status" value="1"/>
</dbReference>
<dbReference type="Pfam" id="PF15902">
    <property type="entry name" value="Sortilin-Vps10"/>
    <property type="match status" value="1"/>
</dbReference>
<dbReference type="Pfam" id="PF15901">
    <property type="entry name" value="Sortilin_C"/>
    <property type="match status" value="1"/>
</dbReference>
<dbReference type="SMART" id="SM00602">
    <property type="entry name" value="VPS10"/>
    <property type="match status" value="1"/>
</dbReference>
<dbReference type="SUPFAM" id="SSF110296">
    <property type="entry name" value="Oligoxyloglucan reducing end-specific cellobiohydrolase"/>
    <property type="match status" value="1"/>
</dbReference>
<dbReference type="SUPFAM" id="SSF49299">
    <property type="entry name" value="PKD domain"/>
    <property type="match status" value="1"/>
</dbReference>
<dbReference type="PROSITE" id="PS50093">
    <property type="entry name" value="PKD"/>
    <property type="match status" value="1"/>
</dbReference>
<reference key="1">
    <citation type="journal article" date="2001" name="Mech. Dev.">
        <title>Identification of SorCS2, a novel member of the VPS10 domain containing receptor family, prominently expressed in the developing mouse brain.</title>
        <authorList>
            <person name="Rezgaoui M."/>
            <person name="Hermey G."/>
            <person name="Riedel I.B."/>
            <person name="Hampe W."/>
            <person name="Schaller H.C."/>
            <person name="Hermans-Borgmeyer I."/>
        </authorList>
    </citation>
    <scope>NUCLEOTIDE SEQUENCE [MRNA]</scope>
    <scope>TISSUE SPECIFICITY</scope>
    <scope>DEVELOPMENTAL STAGE</scope>
    <source>
        <strain>C57BL/6J</strain>
    </source>
</reference>
<reference key="2">
    <citation type="submission" date="2005-07" db="EMBL/GenBank/DDBJ databases">
        <authorList>
            <person name="Mural R.J."/>
            <person name="Adams M.D."/>
            <person name="Myers E.W."/>
            <person name="Smith H.O."/>
            <person name="Venter J.C."/>
        </authorList>
    </citation>
    <scope>NUCLEOTIDE SEQUENCE [LARGE SCALE GENOMIC DNA]</scope>
</reference>
<reference key="3">
    <citation type="journal article" date="2004" name="Genome Res.">
        <title>The status, quality, and expansion of the NIH full-length cDNA project: the Mammalian Gene Collection (MGC).</title>
        <authorList>
            <consortium name="The MGC Project Team"/>
        </authorList>
    </citation>
    <scope>NUCLEOTIDE SEQUENCE [LARGE SCALE MRNA]</scope>
    <source>
        <tissue>Brain</tissue>
    </source>
</reference>
<reference key="4">
    <citation type="journal article" date="2009" name="Mol. Cell. Proteomics">
        <title>The mouse C2C12 myoblast cell surface N-linked glycoproteome: identification, glycosite occupancy, and membrane orientation.</title>
        <authorList>
            <person name="Gundry R.L."/>
            <person name="Raginski K."/>
            <person name="Tarasova Y."/>
            <person name="Tchernyshyov I."/>
            <person name="Bausch-Fluck D."/>
            <person name="Elliott S.T."/>
            <person name="Boheler K.R."/>
            <person name="Van Eyk J.E."/>
            <person name="Wollscheid B."/>
        </authorList>
    </citation>
    <scope>GLYCOSYLATION [LARGE SCALE ANALYSIS] AT ASN-830</scope>
    <source>
        <tissue>Myoblast</tissue>
    </source>
</reference>
<reference key="5">
    <citation type="journal article" date="2010" name="Cell">
        <title>A tissue-specific atlas of mouse protein phosphorylation and expression.</title>
        <authorList>
            <person name="Huttlin E.L."/>
            <person name="Jedrychowski M.P."/>
            <person name="Elias J.E."/>
            <person name="Goswami T."/>
            <person name="Rad R."/>
            <person name="Beausoleil S.A."/>
            <person name="Villen J."/>
            <person name="Haas W."/>
            <person name="Sowa M.E."/>
            <person name="Gygi S.P."/>
        </authorList>
    </citation>
    <scope>IDENTIFICATION BY MASS SPECTROMETRY [LARGE SCALE ANALYSIS]</scope>
    <source>
        <tissue>Brain</tissue>
        <tissue>Brown adipose tissue</tissue>
        <tissue>Lung</tissue>
    </source>
</reference>
<reference key="6">
    <citation type="journal article" date="2011" name="Sci. Signal.">
        <title>Neuronal growth cone retraction relies on proneurotrophin receptor signaling through Rac.</title>
        <authorList>
            <person name="Deinhardt K."/>
            <person name="Kim T."/>
            <person name="Spellman D.S."/>
            <person name="Mains R.E."/>
            <person name="Eipper B.A."/>
            <person name="Neubert T.A."/>
            <person name="Chao M.V."/>
            <person name="Hempstead B.L."/>
        </authorList>
    </citation>
    <scope>FUNCTION</scope>
    <scope>INTERACTION WITH NGF AND NGFR</scope>
    <scope>SUBUNIT</scope>
    <scope>SUBCELLULAR LOCATION</scope>
</reference>
<reference key="7">
    <citation type="journal article" date="2014" name="Neuron">
        <title>SorCS2 regulates dopaminergic wiring and is processed into an apoptotic two-chain receptor in peripheral glia.</title>
        <authorList>
            <person name="Glerup S."/>
            <person name="Olsen D."/>
            <person name="Vaegter C.B."/>
            <person name="Gustafsen C."/>
            <person name="Sjoegaard S.S."/>
            <person name="Hermey G."/>
            <person name="Kjolby M."/>
            <person name="Molgaard S."/>
            <person name="Ulrichsen M."/>
            <person name="Boggild S."/>
            <person name="Skeldal S."/>
            <person name="Fjorback A.N."/>
            <person name="Nyengaard J.R."/>
            <person name="Jacobsen J."/>
            <person name="Bender D."/>
            <person name="Bjarkam C.R."/>
            <person name="Soerensen E.S."/>
            <person name="Fuechtbauer E.M."/>
            <person name="Eichele G."/>
            <person name="Madsen P."/>
            <person name="Willnow T.E."/>
            <person name="Petersen C.M."/>
            <person name="Nykjaer A."/>
        </authorList>
    </citation>
    <scope>FUNCTION</scope>
    <scope>DISRUPTION PHENOTYPE</scope>
    <scope>INTERACTION WITH NGFR</scope>
    <scope>PROTEOLYTIC CLEAVAGE</scope>
    <scope>SUBCELLULAR LOCATION</scope>
    <scope>TISSUE SPECIFICITY</scope>
    <scope>DEVELOPMENTAL STAGE</scope>
</reference>
<reference key="8">
    <citation type="journal article" date="2016" name="Mol. Psychiatry">
        <title>SorCS2 is required for BDNF-dependent plasticity in the hippocampus.</title>
        <authorList>
            <person name="Glerup S."/>
            <person name="Bolcho U."/>
            <person name="Moelgaard S."/>
            <person name="Boeggild S."/>
            <person name="Vaegter C.B."/>
            <person name="Smith A.H."/>
            <person name="Nieto-Gonzalez J.L."/>
            <person name="Ovesen P.L."/>
            <person name="Pedersen L.F."/>
            <person name="Fjorback A.N."/>
            <person name="Kjolby M."/>
            <person name="Login H."/>
            <person name="Holm M.M."/>
            <person name="Andersen O.M."/>
            <person name="Nyengaard J.R."/>
            <person name="Willnow T.E."/>
            <person name="Jensen K."/>
            <person name="Nykjaer A."/>
        </authorList>
    </citation>
    <scope>FUNCTION</scope>
    <scope>DISRUPTION PHENOTYPE</scope>
    <scope>INTERACTION WITH NGFR AND NTRK2</scope>
    <scope>SUBCELLULAR LOCATION</scope>
    <scope>TISSUE SPECIFICITY</scope>
</reference>
<reference key="9">
    <citation type="journal article" date="2017" name="JCI Insight">
        <title>SorCS2-mediated NR2A trafficking regulates motor deficits in Huntington's disease.</title>
        <authorList>
            <person name="Ma Q."/>
            <person name="Yang J."/>
            <person name="Milner T.A."/>
            <person name="Vonsattel J.G."/>
            <person name="Palko M.E."/>
            <person name="Tessarollo L."/>
            <person name="Hempstead B.L."/>
        </authorList>
    </citation>
    <scope>FUNCTION</scope>
    <scope>DISRUPTION PHENOTYPE</scope>
    <scope>SUBCELLULAR LOCATION</scope>
    <scope>INTERACTION WITH VPS35 AND GRIN2A</scope>
    <scope>TISSUE SPECIFICITY</scope>
</reference>
<reference key="10">
    <citation type="journal article" date="2017" name="PLoS Genet.">
        <title>Disruption of SorCS2 reveals differences in the regulation of stereociliary bundle formation between hair cell types in the inner ear.</title>
        <authorList>
            <person name="Forge A."/>
            <person name="Taylor R.R."/>
            <person name="Dawson S.J."/>
            <person name="Lovett M."/>
            <person name="Jagger D.J."/>
        </authorList>
    </citation>
    <scope>DISRUPTION PHENOTYPE</scope>
    <scope>TISSUE SPECIFICITY</scope>
</reference>
<reference key="11">
    <citation type="journal article" date="2018" name="Neuron">
        <title>The BDNF Val66Met Prodomain Disassembles Dendritic Spines Altering Fear Extinction Circuitry and Behavior.</title>
        <authorList>
            <person name="Giza J.I."/>
            <person name="Kim J."/>
            <person name="Meyer H.C."/>
            <person name="Anastasia A."/>
            <person name="Dincheva I."/>
            <person name="Zheng C.I."/>
            <person name="Lopez K."/>
            <person name="Bains H."/>
            <person name="Yang J."/>
            <person name="Bracken C."/>
            <person name="Liston C."/>
            <person name="Jing D."/>
            <person name="Hempstead B.L."/>
            <person name="Lee F.S."/>
        </authorList>
    </citation>
    <scope>FUNCTION</scope>
    <scope>DISRUPTION PHENOTYPE</scope>
    <scope>SUBCELLULAR LOCATION</scope>
    <scope>DEVELOPMENTAL STAGE</scope>
</reference>
<reference key="12">
    <citation type="journal article" date="2019" name="Cell Rep.">
        <title>SorCS2 Controls Functional Expression of Amino Acid Transporter EAAT3 and Protects Neurons from Oxidative Stress and Epilepsy-Induced Pathology.</title>
        <authorList>
            <person name="Malik A.R."/>
            <person name="Szydlowska K."/>
            <person name="Nizinska K."/>
            <person name="Asaro A."/>
            <person name="van Vliet E.A."/>
            <person name="Popp O."/>
            <person name="Dittmar G."/>
            <person name="Fritsche-Guenther R."/>
            <person name="Kirwan J.A."/>
            <person name="Nykjaer A."/>
            <person name="Lukasiuk K."/>
            <person name="Aronica E."/>
            <person name="Willnow T.E."/>
        </authorList>
    </citation>
    <scope>FUNCTION</scope>
    <scope>DISRUPTION PHENOTYPE</scope>
    <scope>INTERACTION WITH SLC1A1</scope>
    <scope>SUBCELLULAR LOCATION</scope>
    <scope>TISSUE SPECIFICITY</scope>
</reference>
<reference evidence="19 20" key="13">
    <citation type="journal article" date="2018" name="Nat. Commun.">
        <title>Structural insights into SorCS2-Nerve Growth Factor complex formation.</title>
        <authorList>
            <person name="Leloup N."/>
            <person name="Chataigner L.M.P."/>
            <person name="Janssen B.J.C."/>
        </authorList>
    </citation>
    <scope>X-RAY CRYSTALLOGRAPHY (3.90 ANGSTROMS) OF 116-1077 IN COMPLEX WITH NGF</scope>
    <scope>SUBUNIT</scope>
    <scope>INTERACTION WITH NGF AND BDNF</scope>
    <scope>SUBCELLULAR LOCATION</scope>
    <scope>GLYCOSYLATION AT ASN-158; ASN-328; ASN-362; ASN-600; ASN-830; ASN-891 AND ASN-902</scope>
    <scope>DISULFIDE BONDS</scope>
    <scope>MUTAGENESIS OF PHE-630</scope>
</reference>
<organism>
    <name type="scientific">Mus musculus</name>
    <name type="common">Mouse</name>
    <dbReference type="NCBI Taxonomy" id="10090"/>
    <lineage>
        <taxon>Eukaryota</taxon>
        <taxon>Metazoa</taxon>
        <taxon>Chordata</taxon>
        <taxon>Craniata</taxon>
        <taxon>Vertebrata</taxon>
        <taxon>Euteleostomi</taxon>
        <taxon>Mammalia</taxon>
        <taxon>Eutheria</taxon>
        <taxon>Euarchontoglires</taxon>
        <taxon>Glires</taxon>
        <taxon>Rodentia</taxon>
        <taxon>Myomorpha</taxon>
        <taxon>Muroidea</taxon>
        <taxon>Muridae</taxon>
        <taxon>Murinae</taxon>
        <taxon>Mus</taxon>
        <taxon>Mus</taxon>
    </lineage>
</organism>
<proteinExistence type="evidence at protein level"/>
<sequence length="1159" mass="128902">MAHRGPPSAPKRPGPTAPDRSFQALLPPCWPRSWPLLLLLLVLVAACGAMGRSPQPGRQGPGVQITRLLPAGRTESGDRKDPQARESEPSVPGLGPGSASGPSTDGAPAPGKGRRARAVPVAGAASASRAQVSLISTSFVLKGDATHNQAMVHWTGENSSVILILTKYYHADMGKVLESSLWRSSDFGTTYTKLTLQPGVTTVIDNFYICPANKRKIILVSSSLGDREQSLFLSTDEGATFQKYPVPFLVEMLLFHPKEEDKVLAYTKDSKLYVSSDLGKKWTLLQERVTKDHVFWAVSGVDDDPNLVHVEAQDLSGGYRYYTCLIYNCSAQPHIAPFSGPIDRGSLTVQDEYIFLKATSTNRTKYYVSYRRSDFVLMKLPKYALPKDLQIISTDEQQVFVAVQEWNQVDTYNLYQSDLRGVRYSLVLENVRSSRQAEENVVIDILEVRGVKGVFLANQKVDGKVTTVITYNKGRDWDYLRPPSTDMNGKPTNCQPPDCYLHLHLRWADNPYVSGTVHTKDTAPGLIMGAGNLGSQLVEYKEEMYITSDCGHTWRQVFEEEHHVLYLDHGGVIAAIKDTSIPLKILKFSVDEGHTWSTHNFTSTSVFVDGLLSEPGDETLVMTVFGHISFRSDWELVKVDFRPSFPRQCGEDDYSSWDLTDLQGDHCIMGQQRSYRKRKSTSWCVKGRSFTSALTSRVCKCRDSDFLCDYGFERSSSSESTANKCSANFWFNPLSPPEDCVLGQTYTSSLGYRKVVSNVCEGGVDLQQSPVQLQCPLQAPRGLQVSIRGEAVAVRPREDVLFVVRQEQGDVLTTKYQVDLGDGFKAMYVNLTLTGEPIRHHYESPGIYRVSVRAENMAGHDEAVLFVQVNSPLQALYLEVVPVIGVNQEVNLTAVLLPLNPNLTVFYWWIGHSLQPLLSLDNSVTTKFTDAGDVRVTVQAACGNSVLQDSRLVRVLDQFQVVPLRFSRELDTFNPNTPEWREDVGLVVTRLLSKETSIPEELLVTVVKPGLPTIADLYVLLPLPRPTRKRSLTSDKRLAAVQQALNSHRISFILRGGLRILVELRDTDTGPQRPGGSGGYWAVVVLFVIGLFAVGAFILYKFKRKRPGRTVYAQMHNEKEQEMTSPVSHSEDAQSTMQGNHSGVVLSINSREMHSYLVG</sequence>
<feature type="signal peptide" evidence="2">
    <location>
        <begin position="1"/>
        <end position="49"/>
    </location>
</feature>
<feature type="chain" id="PRO_0000033173" description="VPS10 domain-containing receptor SorCS2">
    <location>
        <begin position="50"/>
        <end position="1159"/>
    </location>
</feature>
<feature type="chain" id="PRO_0000447472" description="SorCS2 104 kDa chain" evidence="16">
    <location>
        <begin position="118"/>
        <end position="1030"/>
    </location>
</feature>
<feature type="chain" id="PRO_0000447473" description="SorCS2 18 kDa chain" evidence="16">
    <location>
        <begin position="1031"/>
        <end position="1159"/>
    </location>
</feature>
<feature type="chain" id="PRO_0000447474" description="SorCS2 122 kDa chain" evidence="16">
    <location>
        <begin status="unknown"/>
        <end position="1159"/>
    </location>
</feature>
<feature type="topological domain" description="Extracellular" evidence="15">
    <location>
        <begin position="50"/>
        <end position="1078"/>
    </location>
</feature>
<feature type="transmembrane region" description="Helical" evidence="2">
    <location>
        <begin position="1079"/>
        <end position="1099"/>
    </location>
</feature>
<feature type="topological domain" description="Cytoplasmic" evidence="15">
    <location>
        <begin position="1100"/>
        <end position="1159"/>
    </location>
</feature>
<feature type="repeat" description="BNR 1">
    <location>
        <begin position="182"/>
        <end position="193"/>
    </location>
</feature>
<feature type="repeat" description="BNR 2">
    <location>
        <begin position="232"/>
        <end position="243"/>
    </location>
</feature>
<feature type="repeat" description="BNR 3">
    <location>
        <begin position="273"/>
        <end position="284"/>
    </location>
</feature>
<feature type="repeat" description="BNR 4">
    <location>
        <begin position="468"/>
        <end position="479"/>
    </location>
</feature>
<feature type="repeat" description="BNR 5">
    <location>
        <begin position="545"/>
        <end position="556"/>
    </location>
</feature>
<feature type="repeat" description="BNR 6">
    <location>
        <begin position="587"/>
        <end position="598"/>
    </location>
</feature>
<feature type="domain" description="PKD" evidence="3">
    <location>
        <begin position="786"/>
        <end position="876"/>
    </location>
</feature>
<feature type="region of interest" description="Disordered" evidence="4">
    <location>
        <begin position="52"/>
        <end position="120"/>
    </location>
</feature>
<feature type="compositionally biased region" description="Low complexity" evidence="4">
    <location>
        <begin position="54"/>
        <end position="64"/>
    </location>
</feature>
<feature type="compositionally biased region" description="Basic and acidic residues" evidence="4">
    <location>
        <begin position="75"/>
        <end position="88"/>
    </location>
</feature>
<feature type="compositionally biased region" description="Low complexity" evidence="4">
    <location>
        <begin position="89"/>
        <end position="111"/>
    </location>
</feature>
<feature type="site" description="Cleavage" evidence="1">
    <location>
        <begin position="117"/>
        <end position="118"/>
    </location>
</feature>
<feature type="site" description="Cleavage" evidence="1">
    <location>
        <begin position="1030"/>
        <end position="1031"/>
    </location>
</feature>
<feature type="glycosylation site" description="N-linked (GlcNAc...) asparagine" evidence="13 20">
    <location>
        <position position="158"/>
    </location>
</feature>
<feature type="glycosylation site" description="N-linked (GlcNAc...) asparagine" evidence="13 20">
    <location>
        <position position="328"/>
    </location>
</feature>
<feature type="glycosylation site" description="N-linked (GlcNAc...) asparagine" evidence="13 20">
    <location>
        <position position="362"/>
    </location>
</feature>
<feature type="glycosylation site" description="N-linked (GlcNAc...) asparagine" evidence="13 20">
    <location>
        <position position="600"/>
    </location>
</feature>
<feature type="glycosylation site" description="N-linked (GlcNAc...) asparagine" evidence="6 13 20">
    <location>
        <position position="830"/>
    </location>
</feature>
<feature type="glycosylation site" description="N-linked (GlcNAc...) asparagine" evidence="13 20">
    <location>
        <position position="891"/>
    </location>
</feature>
<feature type="glycosylation site" description="N-linked (GlcNAc...) asparagine" evidence="13 20">
    <location>
        <position position="902"/>
    </location>
</feature>
<feature type="disulfide bond" evidence="13 19 20">
    <location>
        <begin position="324"/>
        <end position="329"/>
    </location>
</feature>
<feature type="disulfide bond" evidence="13 19 20">
    <location>
        <begin position="494"/>
        <end position="499"/>
    </location>
</feature>
<feature type="disulfide bond" evidence="13 19 20">
    <location>
        <begin position="649"/>
        <end position="684"/>
    </location>
</feature>
<feature type="disulfide bond" evidence="13 19 20">
    <location>
        <begin position="667"/>
        <end position="699"/>
    </location>
</feature>
<feature type="disulfide bond" evidence="13 19 20">
    <location>
        <begin position="701"/>
        <end position="760"/>
    </location>
</feature>
<feature type="disulfide bond" evidence="13 19 20">
    <location>
        <begin position="708"/>
        <end position="725"/>
    </location>
</feature>
<feature type="disulfide bond" evidence="13 19 20">
    <location>
        <begin position="740"/>
        <end position="775"/>
    </location>
</feature>
<feature type="mutagenesis site" description="Introduces an N-glycosylation site and disrupts interaction with NGF and BDNF." evidence="13">
    <original>F</original>
    <variation>N</variation>
    <location>
        <position position="630"/>
    </location>
</feature>
<feature type="sequence conflict" description="In Ref. 1; AAF88135 and 3; AAI38876." evidence="15" ref="1 3">
    <original>M</original>
    <variation>T</variation>
    <location>
        <position position="252"/>
    </location>
</feature>
<comment type="function">
    <text evidence="1 7 8 9 11 12 14">The heterodimer formed by NGFR and SORCS2 functions as receptor for the precursor forms of NGF (proNGF) and BDNF (proBDNF) (PubMed:22155786, PubMed:24908487, PubMed:27457814, PubMed:29909994). ProNGF and proBDNF binding both promote axon growth cone collapse (in vitro) (PubMed:24908487). Plays a role in the regulation of dendritic spine density in hippocampus neurons (PubMed:29909994). Required for normal neurite branching and extension in response to BDNF (PubMed:27457814, PubMed:29909994). Plays a role in BDNF-dependent hippocampal synaptic plasticity (PubMed:27457814, PubMed:29909994). Together with NGFR and NTRK2, is required both for BDNF-mediated synaptic long-term depression and long-term potentiation (PubMed:27457814). ProNGF binding promotes dissociation of TRIO from the heterodimer, which leads to inactivation of RAC1 and/or RAC2 and subsequent reorganization of the actin cytoskeleton (By similarity). Together with the retromer complex subunit VPS35, required for normal expression of GRIN2A at synapses and dendritic cell membranes (PubMed:28469074). Required for normal expression of the amino acid transporter SLC1A1 at the cell membrane, and thereby contributes to protect cells against oxidative stress (PubMed:30840898).</text>
</comment>
<comment type="subunit">
    <text evidence="1 7 8 9 11 13 14">Homodimer (in vitro) (PubMed:30061605). Heterodimer with NGFR (PubMed:22155786, PubMed:24908487, PubMed:27457814). The extracellular domains of the heterodimer bind the precursor form of NGF (proNGF) (PubMed:22155786). Can also bind mature NGF and BDNF. Each chain in the receptor dimer interacts (via extracellular domain) with an NGF dimer (in vitro) (PubMed:30061605). Interacts with the precursor forms of BDNF (proBDNF) and NTF3 (proNT3) (By similarity). The cytoplasmic region of the heterodimer formed by NGFR and SORCS2 binds TRIO. ProNGF binding mediates dissociation of TRIO from the receptor complex (By similarity). Interacts with SLC1A1 (PubMed:30840898). Interacts with VPS35. Interacts (via extracellular domain) with NTRK2 (via extracellular domain) (PubMed:27457814). Interacts with VPS35. Interacts (via extracellular domain) with GRIN2A (PubMed:28469074).</text>
</comment>
<comment type="interaction">
    <interactant intactId="EBI-9915438">
        <id>Q9EPR5</id>
    </interactant>
    <interactant intactId="EBI-4411273">
        <id>Q9Z0W1</id>
        <label>Ngfr</label>
    </interactant>
    <organismsDiffer>false</organismsDiffer>
    <experiments>4</experiments>
</comment>
<comment type="subcellular location">
    <subcellularLocation>
        <location evidence="7 8 9 14 18">Cell membrane</location>
        <topology evidence="18">Single-pass type I membrane protein</topology>
    </subcellularLocation>
    <subcellularLocation>
        <location evidence="8">Cell projection</location>
    </subcellularLocation>
    <subcellularLocation>
        <location evidence="11 14">Cytoplasmic vesicle membrane</location>
        <topology evidence="1">Single-pass type I membrane protein</topology>
    </subcellularLocation>
    <subcellularLocation>
        <location evidence="14">Early endosome membrane</location>
    </subcellularLocation>
    <subcellularLocation>
        <location evidence="14">Recycling endosome membrane</location>
    </subcellularLocation>
    <subcellularLocation>
        <location evidence="14">Synapse</location>
        <location evidence="14">Synaptosome</location>
    </subcellularLocation>
    <subcellularLocation>
        <location evidence="11">Perikaryon</location>
    </subcellularLocation>
    <subcellularLocation>
        <location evidence="9">Cell projection</location>
        <location evidence="9">Dendrite</location>
    </subcellularLocation>
    <subcellularLocation>
        <location evidence="12">Cell projection</location>
        <location evidence="12">Dendritic spine</location>
    </subcellularLocation>
    <subcellularLocation>
        <location evidence="9">Synapse</location>
    </subcellularLocation>
    <subcellularLocation>
        <location evidence="9">Postsynaptic density membrane</location>
    </subcellularLocation>
</comment>
<comment type="tissue specificity">
    <text evidence="5 8 9 10 11 14">Detected in Purkinje cells and pyramidal neurons in brain cortex, cerebellum, dentate gyrus, striatum and hippocampus, and in glia cells in dorsal root ganglia (DRG) (PubMed:24908487, PubMed:27457814, PubMed:28469074, PubMed:30840898). Not detected in neurons from the dorsal root ganglia (PubMed:24908487). Detected in hair cells and supporting cells in the organ of Corti, utricuar maculae and cristae (at protein level) (PubMed:28346477). Detected in brain, lung and testis (PubMed:11165493). Detected in the inner ear in neonates (PubMed:28346477).</text>
</comment>
<comment type="developmental stage">
    <text evidence="5 8 12">Expression is highest in developing brain. Transiently expressed in all 3 germ layers (PubMed:11165493). Detected in midbrain, spinal cord, heart and lung at 15.5 dpc (PubMed:24908487). Coexpressed with NGFR in neurons in the ventral part of the hippocampus CA1 region at 23 and 30 days after birth. The number of neurons that coexpress SORCS2 and NGFR is increased 30 days after birth. SORCS2 and NGFR are no longer coexpressed in hippocampus neurons in 60 day old adults (PubMed:29909994).</text>
</comment>
<comment type="PTM">
    <text evidence="1">N-glycosylated.</text>
</comment>
<comment type="PTM">
    <text evidence="1 8">Proteolytic cleavage removes a propeptide, giving rise to a 122 kDa chain that includes a cytoplasmic tail. Further cleavage gives rise to a 104 kDa chain that lacks the cytoplasmic tail, and a membrane-bound 18 kDa chain (PubMed:24908487). The 104 kDa chain remains bound to the 18 kDa chain (By similarity).</text>
</comment>
<comment type="disruption phenotype">
    <text evidence="8 9 10 11 12 14">Mice are viable and fertile and display no obvious phenotype, but their neurons do not display growth cone collapse in response to proBDNF (PubMed:24908487, PubMed:29909994). Cultured neurons from mutant mice display longer neurites than wild-type neurons, and the frontal cortex of 12 week old mice is hyperinnervated with fibers from tyrosine hydroxylase-positive neurons (PubMed:24908487, PubMed:29909994). Mutant mice display mildly increased spontaneous locomotor activity; contrary to wild-type, treatment with amphetamine decreases their locomotor activity. After sciatic nerve injury, 2 day old and adult mice show discreased Schwann cell apoptosis distal to the lesion (PubMed:24908487). Mutant mice show increased mortality after seizures caused by repeated treatments with the convulsant pentylenetetrazol (PTZ). Hippocampus neurons from mutant mice display increased levels of oxidative stress and increased apoptosis (PubMed:30840898). Mutant mice display subtle behavorial defects, with hyperactivity, altered acquisition of spatial memory, but a normal startle response to noise (PubMed:27457814). Heterozygous mice have normal body weight and motor skills, but combination with a mouse model for Huntington disease (HD) gives rise to increased severity of impaired motor skills (PubMed:28469074). After a cross of mice carrying a Cre construct under the control of the Tek promoter with mice carrying a floxed Nppc gene a subset of the offspring displayed behavorial defects, including hyperactivity and hanging from cage tops. A subset (11 out of 33 mice) displayed strongly reduced body weight and profound deafness, with defects in the organization of the outer and inner hair cell bundles in the organ of Corti. Analysis of the genomic DNA from deaf mice showed that in 13 cases, these mice had the Cre construct inserted into the first intron of the Sorcs2 gene, but in 21 cases, the insertion had occured in an Ig kappa locus (PubMed:28346477).</text>
</comment>
<comment type="miscellaneous">
    <text evidence="11">SORCS2 expression is decreased after the onset of symptoms in mouse models for Huntington disease (HD). SORCS2 does not interact with wild-type HTT, but does interact with mutant HTT containing a long polyglutamine stretch.</text>
</comment>
<comment type="similarity">
    <text evidence="15">Belongs to the VPS10-related sortilin family. SORCS subfamily.</text>
</comment>
<comment type="caution">
    <text evidence="8 9 10 11 14 17">Gene disruption gives rise to contradictory results (PubMed:24908487, PubMed:27457814, PubMed:28346477, PubMed:28469074, PubMed:30840898). The majority of studies report normal body weight, normal startle responses to noise and relatively minor behavorial defects (PubMed:24908487, PubMed:27457814, PubMed:28469074, PubMed:30840898). Another publication finds that gene disruption gives rise to mice with strongly reduced body weight and profound deafness. Gene disruption was due to random insertion of a Cre construct under the control of the TEK promoter. Analysis of the genomic DNA showed that in 21 cases the Cre construct had inserted in an Ig kappa locus, and in 13 cases the construct had inserted into the first intron of the SORCS2 gene, leading to strongly reduced SORCS2 expression (PubMed:28346477). The reasons for these discrepancies are not clear, but may be due to the way the experiments were done. The fact that an identical phenotype was found when the Cre construct under the control of the TEK promoter had inserted in an Ig kappa locus suggests that there are additional, unidentified causes that play a role in the observed defects.</text>
</comment>
<protein>
    <recommendedName>
        <fullName>VPS10 domain-containing receptor SorCS2</fullName>
    </recommendedName>
    <component>
        <recommendedName>
            <fullName evidence="16">SorCS2 122 kDa chain</fullName>
        </recommendedName>
    </component>
    <component>
        <recommendedName>
            <fullName evidence="16">SorCS2 104 kDa chain</fullName>
        </recommendedName>
    </component>
    <component>
        <recommendedName>
            <fullName evidence="16">SorCS2 18 kDa chain</fullName>
        </recommendedName>
    </component>
</protein>
<gene>
    <name type="primary">Sorcs2</name>
</gene>
<evidence type="ECO:0000250" key="1">
    <source>
        <dbReference type="UniProtKB" id="Q96PQ0"/>
    </source>
</evidence>
<evidence type="ECO:0000255" key="2"/>
<evidence type="ECO:0000255" key="3">
    <source>
        <dbReference type="PROSITE-ProRule" id="PRU00151"/>
    </source>
</evidence>
<evidence type="ECO:0000256" key="4">
    <source>
        <dbReference type="SAM" id="MobiDB-lite"/>
    </source>
</evidence>
<evidence type="ECO:0000269" key="5">
    <source>
    </source>
</evidence>
<evidence type="ECO:0000269" key="6">
    <source>
    </source>
</evidence>
<evidence type="ECO:0000269" key="7">
    <source>
    </source>
</evidence>
<evidence type="ECO:0000269" key="8">
    <source>
    </source>
</evidence>
<evidence type="ECO:0000269" key="9">
    <source>
    </source>
</evidence>
<evidence type="ECO:0000269" key="10">
    <source>
    </source>
</evidence>
<evidence type="ECO:0000269" key="11">
    <source>
    </source>
</evidence>
<evidence type="ECO:0000269" key="12">
    <source>
    </source>
</evidence>
<evidence type="ECO:0000269" key="13">
    <source>
    </source>
</evidence>
<evidence type="ECO:0000269" key="14">
    <source>
    </source>
</evidence>
<evidence type="ECO:0000305" key="15"/>
<evidence type="ECO:0000305" key="16">
    <source>
    </source>
</evidence>
<evidence type="ECO:0000305" key="17">
    <source>
    </source>
</evidence>
<evidence type="ECO:0000305" key="18">
    <source>
    </source>
</evidence>
<evidence type="ECO:0007744" key="19">
    <source>
        <dbReference type="PDB" id="6FFY"/>
    </source>
</evidence>
<evidence type="ECO:0007744" key="20">
    <source>
        <dbReference type="PDB" id="6FG9"/>
    </source>
</evidence>
<keyword id="KW-0002">3D-structure</keyword>
<keyword id="KW-1003">Cell membrane</keyword>
<keyword id="KW-0966">Cell projection</keyword>
<keyword id="KW-0968">Cytoplasmic vesicle</keyword>
<keyword id="KW-1015">Disulfide bond</keyword>
<keyword id="KW-0967">Endosome</keyword>
<keyword id="KW-0325">Glycoprotein</keyword>
<keyword id="KW-0472">Membrane</keyword>
<keyword id="KW-0628">Postsynaptic cell membrane</keyword>
<keyword id="KW-1185">Reference proteome</keyword>
<keyword id="KW-0677">Repeat</keyword>
<keyword id="KW-0732">Signal</keyword>
<keyword id="KW-0770">Synapse</keyword>
<keyword id="KW-0771">Synaptosome</keyword>
<keyword id="KW-0812">Transmembrane</keyword>
<keyword id="KW-1133">Transmembrane helix</keyword>
<name>SORC2_MOUSE</name>
<accession>Q9EPR5</accession>
<accession>B2RSI2</accession>
<accession>B2RSI4</accession>